<comment type="function">
    <text evidence="3">Essential subunit of the gamma-secretase complex, an endoprotease complex that catalyzes the intramembrane cleavage of integral membrane proteins such as Notch receptors and APP (amyloid-beta precursor protein). The gamma-secretase complex plays a role in Notch and Wnt signaling cascades and regulation of downstream processes via its role in processing key regulatory proteins, and by regulating cytosolic CTNNB1 levels.</text>
</comment>
<comment type="subunit">
    <text evidence="1 3">Component of the gamma-secretase complex. The functional gamma-secretase complex is composed of at least four polypeptides: a presenilin homodimer (PSEN1 or PSEN2), nicastrin (NCSTN), APH1 (APH1A or APH1B) and PEN2 (PubMed:12716934). Binds to proteolytic processed C-terminal fragments C83 and C99 of the amyloid precursor protein (APP). Interacts with PSEN1 and PSEN2.</text>
</comment>
<comment type="interaction">
    <interactant intactId="EBI-998934">
        <id>P57716</id>
    </interactant>
    <interactant intactId="EBI-644340">
        <id>P14211</id>
        <label>Calr</label>
    </interactant>
    <organismsDiffer>false</organismsDiffer>
    <experiments>2</experiments>
</comment>
<comment type="interaction">
    <interactant intactId="EBI-998934">
        <id>P57716</id>
    </interactant>
    <interactant intactId="EBI-644384">
        <id>Q9DBY1</id>
        <label>Syvn1</label>
    </interactant>
    <organismsDiffer>false</organismsDiffer>
    <experiments>2</experiments>
</comment>
<comment type="subcellular location">
    <subcellularLocation>
        <location evidence="1">Membrane</location>
        <topology evidence="1">Single-pass type I membrane protein</topology>
    </subcellularLocation>
    <subcellularLocation>
        <location evidence="1">Cytoplasmic vesicle membrane</location>
        <topology evidence="1">Single-pass type I membrane protein</topology>
    </subcellularLocation>
    <subcellularLocation>
        <location evidence="1">Melanosome</location>
    </subcellularLocation>
    <text evidence="1">Identified by mass spectrometry in melanosome fractions from stage I to stage IV.</text>
</comment>
<comment type="PTM">
    <text evidence="1">N-glycosylated.</text>
</comment>
<comment type="disruption phenotype">
    <text evidence="3">Full embryonic lethality. No embryos survive past 10.d dpc. At 9.5 dpc the embryos display a phenotype similar to that of Notch1-deficient mice, with defects in the development of the caudal part of the embryo and in somite segementation, defective vascular morphogenesis in the yolk sac, and patterning defects in the developing heart and neural tube. Assembly of the gamma-secretase complex and APP processing are disrupted.</text>
</comment>
<comment type="similarity">
    <text evidence="5">Belongs to the nicastrin family.</text>
</comment>
<gene>
    <name type="primary">Ncstn</name>
</gene>
<evidence type="ECO:0000250" key="1">
    <source>
        <dbReference type="UniProtKB" id="Q92542"/>
    </source>
</evidence>
<evidence type="ECO:0000255" key="2"/>
<evidence type="ECO:0000269" key="3">
    <source>
    </source>
</evidence>
<evidence type="ECO:0000269" key="4">
    <source>
    </source>
</evidence>
<evidence type="ECO:0000305" key="5"/>
<reference key="1">
    <citation type="journal article" date="2000" name="Nature">
        <title>Nicastrin modulates presenilin-mediated notch/glp-1 signal transduction and betaAPP processing.</title>
        <authorList>
            <person name="Yu G."/>
            <person name="Nishimura M."/>
            <person name="Arawaka S."/>
            <person name="Levitan D."/>
            <person name="Zhang L."/>
            <person name="Tandon A."/>
            <person name="Song Y.-Q."/>
            <person name="Rogaeva E."/>
            <person name="Chen F."/>
            <person name="Kawarai T."/>
            <person name="Supala A."/>
            <person name="Levesque L."/>
            <person name="Yu H."/>
            <person name="Yang D.-S."/>
            <person name="Holmes E."/>
            <person name="Milman P."/>
            <person name="Liang Y."/>
            <person name="Zhang D.M."/>
            <person name="Xu D.H."/>
            <person name="Sato C."/>
            <person name="Rogaev E."/>
            <person name="Smith M."/>
            <person name="Janus C."/>
            <person name="Zhang Y."/>
            <person name="Aebersold R."/>
            <person name="Farrer L.S."/>
            <person name="Sorbi S."/>
            <person name="Bruni A."/>
            <person name="Fraser P.E."/>
            <person name="St George-Hyslop P.H."/>
        </authorList>
    </citation>
    <scope>NUCLEOTIDE SEQUENCE [MRNA]</scope>
</reference>
<reference key="2">
    <citation type="journal article" date="2009" name="PLoS Biol.">
        <title>Lineage-specific biology revealed by a finished genome assembly of the mouse.</title>
        <authorList>
            <person name="Church D.M."/>
            <person name="Goodstadt L."/>
            <person name="Hillier L.W."/>
            <person name="Zody M.C."/>
            <person name="Goldstein S."/>
            <person name="She X."/>
            <person name="Bult C.J."/>
            <person name="Agarwala R."/>
            <person name="Cherry J.L."/>
            <person name="DiCuccio M."/>
            <person name="Hlavina W."/>
            <person name="Kapustin Y."/>
            <person name="Meric P."/>
            <person name="Maglott D."/>
            <person name="Birtle Z."/>
            <person name="Marques A.C."/>
            <person name="Graves T."/>
            <person name="Zhou S."/>
            <person name="Teague B."/>
            <person name="Potamousis K."/>
            <person name="Churas C."/>
            <person name="Place M."/>
            <person name="Herschleb J."/>
            <person name="Runnheim R."/>
            <person name="Forrest D."/>
            <person name="Amos-Landgraf J."/>
            <person name="Schwartz D.C."/>
            <person name="Cheng Z."/>
            <person name="Lindblad-Toh K."/>
            <person name="Eichler E.E."/>
            <person name="Ponting C.P."/>
        </authorList>
    </citation>
    <scope>NUCLEOTIDE SEQUENCE [LARGE SCALE GENOMIC DNA]</scope>
    <source>
        <strain>C57BL/6J</strain>
    </source>
</reference>
<reference key="3">
    <citation type="journal article" date="2004" name="Genome Res.">
        <title>The status, quality, and expansion of the NIH full-length cDNA project: the Mammalian Gene Collection (MGC).</title>
        <authorList>
            <consortium name="The MGC Project Team"/>
        </authorList>
    </citation>
    <scope>NUCLEOTIDE SEQUENCE [LARGE SCALE MRNA]</scope>
</reference>
<reference key="4">
    <citation type="journal article" date="2003" name="J. Neurosci.">
        <title>Nicastrin is required for assembly of presenilin/gamma-secretase complexes to mediate Notch signaling and for processing and trafficking of beta-amyloid precursor protein in mammals.</title>
        <authorList>
            <person name="Li T."/>
            <person name="Ma G."/>
            <person name="Cai H."/>
            <person name="Price D.L."/>
            <person name="Wong P.C."/>
        </authorList>
    </citation>
    <scope>DISRUPTION PHENOTYPE</scope>
    <scope>FUNCTION</scope>
    <scope>SUBUNIT</scope>
</reference>
<reference key="5">
    <citation type="journal article" date="2009" name="Nat. Biotechnol.">
        <title>Mass-spectrometric identification and relative quantification of N-linked cell surface glycoproteins.</title>
        <authorList>
            <person name="Wollscheid B."/>
            <person name="Bausch-Fluck D."/>
            <person name="Henderson C."/>
            <person name="O'Brien R."/>
            <person name="Bibel M."/>
            <person name="Schiess R."/>
            <person name="Aebersold R."/>
            <person name="Watts J.D."/>
        </authorList>
    </citation>
    <scope>GLYCOSYLATION [LARGE SCALE ANALYSIS] AT ASN-186; ASN-263; ASN-386; ASN-505; ASN-561 AND ASN-611</scope>
</reference>
<reference key="6">
    <citation type="journal article" date="2010" name="Cell">
        <title>A tissue-specific atlas of mouse protein phosphorylation and expression.</title>
        <authorList>
            <person name="Huttlin E.L."/>
            <person name="Jedrychowski M.P."/>
            <person name="Elias J.E."/>
            <person name="Goswami T."/>
            <person name="Rad R."/>
            <person name="Beausoleil S.A."/>
            <person name="Villen J."/>
            <person name="Haas W."/>
            <person name="Sowa M.E."/>
            <person name="Gygi S.P."/>
        </authorList>
    </citation>
    <scope>IDENTIFICATION BY MASS SPECTROMETRY [LARGE SCALE ANALYSIS]</scope>
    <source>
        <tissue>Brain</tissue>
        <tissue>Brown adipose tissue</tissue>
        <tissue>Heart</tissue>
        <tissue>Kidney</tissue>
        <tissue>Liver</tissue>
        <tissue>Lung</tissue>
        <tissue>Pancreas</tissue>
        <tissue>Spleen</tissue>
        <tissue>Testis</tissue>
    </source>
</reference>
<dbReference type="EMBL" id="AF240469">
    <property type="protein sequence ID" value="AAG11413.1"/>
    <property type="molecule type" value="mRNA"/>
</dbReference>
<dbReference type="EMBL" id="AC158930">
    <property type="status" value="NOT_ANNOTATED_CDS"/>
    <property type="molecule type" value="Genomic_DNA"/>
</dbReference>
<dbReference type="EMBL" id="BC019998">
    <property type="protein sequence ID" value="AAH19998.1"/>
    <property type="molecule type" value="mRNA"/>
</dbReference>
<dbReference type="CCDS" id="CCDS15507.1"/>
<dbReference type="RefSeq" id="NP_067620.3">
    <property type="nucleotide sequence ID" value="NM_021607.3"/>
</dbReference>
<dbReference type="SMR" id="P57716"/>
<dbReference type="BioGRID" id="208543">
    <property type="interactions" value="52"/>
</dbReference>
<dbReference type="ComplexPortal" id="CPX-4234">
    <property type="entry name" value="Gamma-secretase complex, Aph1a-Psen1 variant"/>
</dbReference>
<dbReference type="ComplexPortal" id="CPX-4235">
    <property type="entry name" value="Gamma-secretase complex, Aph1b-Psen1 variant"/>
</dbReference>
<dbReference type="ComplexPortal" id="CPX-4236">
    <property type="entry name" value="Gamma-secretase complex, Aph1a-Psen2 variant"/>
</dbReference>
<dbReference type="ComplexPortal" id="CPX-4237">
    <property type="entry name" value="Gamma-secretase complex, Aph1b-Psen2 variant"/>
</dbReference>
<dbReference type="CORUM" id="P57716"/>
<dbReference type="DIP" id="DIP-36334N"/>
<dbReference type="FunCoup" id="P57716">
    <property type="interactions" value="3207"/>
</dbReference>
<dbReference type="IntAct" id="P57716">
    <property type="interactions" value="46"/>
</dbReference>
<dbReference type="MINT" id="P57716"/>
<dbReference type="STRING" id="10090.ENSMUSP00000003550"/>
<dbReference type="TCDB" id="4.G.1.1.1">
    <property type="family name" value="the Gama-secretase (Gama-secretase) family"/>
</dbReference>
<dbReference type="GlyConnect" id="2562">
    <property type="glycosylation" value="8 N-Linked glycans (7 sites)"/>
</dbReference>
<dbReference type="GlyCosmos" id="P57716">
    <property type="glycosylation" value="16 sites, 8 glycans"/>
</dbReference>
<dbReference type="GlyGen" id="P57716">
    <property type="glycosylation" value="17 sites, 15 N-linked glycans (11 sites), 1 O-linked glycan (1 site)"/>
</dbReference>
<dbReference type="iPTMnet" id="P57716"/>
<dbReference type="PhosphoSitePlus" id="P57716"/>
<dbReference type="SwissPalm" id="P57716"/>
<dbReference type="jPOST" id="P57716"/>
<dbReference type="PaxDb" id="10090-ENSMUSP00000003550"/>
<dbReference type="PeptideAtlas" id="P57716"/>
<dbReference type="ProteomicsDB" id="287425"/>
<dbReference type="Pumba" id="P57716"/>
<dbReference type="Antibodypedia" id="20490">
    <property type="antibodies" value="536 antibodies from 45 providers"/>
</dbReference>
<dbReference type="DNASU" id="59287"/>
<dbReference type="Ensembl" id="ENSMUST00000003550.11">
    <property type="protein sequence ID" value="ENSMUSP00000003550.5"/>
    <property type="gene ID" value="ENSMUSG00000003458.13"/>
</dbReference>
<dbReference type="GeneID" id="59287"/>
<dbReference type="KEGG" id="mmu:59287"/>
<dbReference type="UCSC" id="uc007dpk.2">
    <property type="organism name" value="mouse"/>
</dbReference>
<dbReference type="AGR" id="MGI:1891700"/>
<dbReference type="CTD" id="23385"/>
<dbReference type="MGI" id="MGI:1891700">
    <property type="gene designation" value="Ncstn"/>
</dbReference>
<dbReference type="VEuPathDB" id="HostDB:ENSMUSG00000003458"/>
<dbReference type="eggNOG" id="KOG2657">
    <property type="taxonomic scope" value="Eukaryota"/>
</dbReference>
<dbReference type="GeneTree" id="ENSGT00390000014633"/>
<dbReference type="HOGENOM" id="CLU_024257_0_0_1"/>
<dbReference type="InParanoid" id="P57716"/>
<dbReference type="OMA" id="ECVYPGV"/>
<dbReference type="OrthoDB" id="755951at2759"/>
<dbReference type="PhylomeDB" id="P57716"/>
<dbReference type="TreeFam" id="TF317086"/>
<dbReference type="Reactome" id="R-MMU-1251985">
    <property type="pathway name" value="Nuclear signaling by ERBB4"/>
</dbReference>
<dbReference type="Reactome" id="R-MMU-193692">
    <property type="pathway name" value="Regulated proteolysis of p75NTR"/>
</dbReference>
<dbReference type="Reactome" id="R-MMU-205043">
    <property type="pathway name" value="NRIF signals cell death from the nucleus"/>
</dbReference>
<dbReference type="Reactome" id="R-MMU-3928665">
    <property type="pathway name" value="EPH-ephrin mediated repulsion of cells"/>
</dbReference>
<dbReference type="Reactome" id="R-MMU-6798695">
    <property type="pathway name" value="Neutrophil degranulation"/>
</dbReference>
<dbReference type="Reactome" id="R-MMU-9013507">
    <property type="pathway name" value="NOTCH3 Activation and Transmission of Signal to the Nucleus"/>
</dbReference>
<dbReference type="Reactome" id="R-MMU-9017802">
    <property type="pathway name" value="Noncanonical activation of NOTCH3"/>
</dbReference>
<dbReference type="Reactome" id="R-MMU-9839383">
    <property type="pathway name" value="TGFBR3 PTM regulation"/>
</dbReference>
<dbReference type="BioGRID-ORCS" id="59287">
    <property type="hits" value="10 hits in 79 CRISPR screens"/>
</dbReference>
<dbReference type="ChiTaRS" id="Ncstn">
    <property type="organism name" value="mouse"/>
</dbReference>
<dbReference type="PRO" id="PR:P57716"/>
<dbReference type="Proteomes" id="UP000000589">
    <property type="component" value="Chromosome 1"/>
</dbReference>
<dbReference type="RNAct" id="P57716">
    <property type="molecule type" value="protein"/>
</dbReference>
<dbReference type="Bgee" id="ENSMUSG00000003458">
    <property type="expression patterns" value="Expressed in spermatocyte and 207 other cell types or tissues"/>
</dbReference>
<dbReference type="ExpressionAtlas" id="P57716">
    <property type="expression patterns" value="baseline and differential"/>
</dbReference>
<dbReference type="GO" id="GO:0030659">
    <property type="term" value="C:cytoplasmic vesicle membrane"/>
    <property type="evidence" value="ECO:0007669"/>
    <property type="project" value="UniProtKB-SubCell"/>
</dbReference>
<dbReference type="GO" id="GO:0005769">
    <property type="term" value="C:early endosome"/>
    <property type="evidence" value="ECO:0007669"/>
    <property type="project" value="Ensembl"/>
</dbReference>
<dbReference type="GO" id="GO:0005783">
    <property type="term" value="C:endoplasmic reticulum"/>
    <property type="evidence" value="ECO:0000314"/>
    <property type="project" value="MGI"/>
</dbReference>
<dbReference type="GO" id="GO:0005789">
    <property type="term" value="C:endoplasmic reticulum membrane"/>
    <property type="evidence" value="ECO:0000303"/>
    <property type="project" value="ComplexPortal"/>
</dbReference>
<dbReference type="GO" id="GO:0070765">
    <property type="term" value="C:gamma-secretase complex"/>
    <property type="evidence" value="ECO:0000314"/>
    <property type="project" value="MGI"/>
</dbReference>
<dbReference type="GO" id="GO:0005794">
    <property type="term" value="C:Golgi apparatus"/>
    <property type="evidence" value="ECO:0000314"/>
    <property type="project" value="MGI"/>
</dbReference>
<dbReference type="GO" id="GO:0000139">
    <property type="term" value="C:Golgi membrane"/>
    <property type="evidence" value="ECO:0000303"/>
    <property type="project" value="ComplexPortal"/>
</dbReference>
<dbReference type="GO" id="GO:0005765">
    <property type="term" value="C:lysosomal membrane"/>
    <property type="evidence" value="ECO:0007669"/>
    <property type="project" value="Ensembl"/>
</dbReference>
<dbReference type="GO" id="GO:0005764">
    <property type="term" value="C:lysosome"/>
    <property type="evidence" value="ECO:0000314"/>
    <property type="project" value="MGI"/>
</dbReference>
<dbReference type="GO" id="GO:0042470">
    <property type="term" value="C:melanosome"/>
    <property type="evidence" value="ECO:0007669"/>
    <property type="project" value="UniProtKB-SubCell"/>
</dbReference>
<dbReference type="GO" id="GO:0016020">
    <property type="term" value="C:membrane"/>
    <property type="evidence" value="ECO:0000314"/>
    <property type="project" value="MGI"/>
</dbReference>
<dbReference type="GO" id="GO:0005886">
    <property type="term" value="C:plasma membrane"/>
    <property type="evidence" value="ECO:0000314"/>
    <property type="project" value="MGI"/>
</dbReference>
<dbReference type="GO" id="GO:0042734">
    <property type="term" value="C:presynaptic membrane"/>
    <property type="evidence" value="ECO:0007669"/>
    <property type="project" value="Ensembl"/>
</dbReference>
<dbReference type="GO" id="GO:0032991">
    <property type="term" value="C:protein-containing complex"/>
    <property type="evidence" value="ECO:0000314"/>
    <property type="project" value="MGI"/>
</dbReference>
<dbReference type="GO" id="GO:0042383">
    <property type="term" value="C:sarcolemma"/>
    <property type="evidence" value="ECO:0007669"/>
    <property type="project" value="Ensembl"/>
</dbReference>
<dbReference type="GO" id="GO:0008021">
    <property type="term" value="C:synaptic vesicle"/>
    <property type="evidence" value="ECO:0000314"/>
    <property type="project" value="MGI"/>
</dbReference>
<dbReference type="GO" id="GO:0051117">
    <property type="term" value="F:ATPase binding"/>
    <property type="evidence" value="ECO:0007669"/>
    <property type="project" value="Ensembl"/>
</dbReference>
<dbReference type="GO" id="GO:0061133">
    <property type="term" value="F:endopeptidase activator activity"/>
    <property type="evidence" value="ECO:0007669"/>
    <property type="project" value="Ensembl"/>
</dbReference>
<dbReference type="GO" id="GO:0070851">
    <property type="term" value="F:growth factor receptor binding"/>
    <property type="evidence" value="ECO:0007669"/>
    <property type="project" value="Ensembl"/>
</dbReference>
<dbReference type="GO" id="GO:0008233">
    <property type="term" value="F:peptidase activity"/>
    <property type="evidence" value="ECO:0007669"/>
    <property type="project" value="Ensembl"/>
</dbReference>
<dbReference type="GO" id="GO:0030674">
    <property type="term" value="F:protein-macromolecule adaptor activity"/>
    <property type="evidence" value="ECO:0007669"/>
    <property type="project" value="Ensembl"/>
</dbReference>
<dbReference type="GO" id="GO:0030534">
    <property type="term" value="P:adult behavior"/>
    <property type="evidence" value="ECO:0000315"/>
    <property type="project" value="MGI"/>
</dbReference>
<dbReference type="GO" id="GO:0042983">
    <property type="term" value="P:amyloid precursor protein biosynthetic process"/>
    <property type="evidence" value="ECO:0000315"/>
    <property type="project" value="MGI"/>
</dbReference>
<dbReference type="GO" id="GO:0042987">
    <property type="term" value="P:amyloid precursor protein catabolic process"/>
    <property type="evidence" value="ECO:0000266"/>
    <property type="project" value="ComplexPortal"/>
</dbReference>
<dbReference type="GO" id="GO:0042982">
    <property type="term" value="P:amyloid precursor protein metabolic process"/>
    <property type="evidence" value="ECO:0000315"/>
    <property type="project" value="MGI"/>
</dbReference>
<dbReference type="GO" id="GO:0034205">
    <property type="term" value="P:amyloid-beta formation"/>
    <property type="evidence" value="ECO:0000316"/>
    <property type="project" value="MGI"/>
</dbReference>
<dbReference type="GO" id="GO:0050435">
    <property type="term" value="P:amyloid-beta metabolic process"/>
    <property type="evidence" value="ECO:0000315"/>
    <property type="project" value="MGI"/>
</dbReference>
<dbReference type="GO" id="GO:0071277">
    <property type="term" value="P:cellular response to calcium ion"/>
    <property type="evidence" value="ECO:0000315"/>
    <property type="project" value="MGI"/>
</dbReference>
<dbReference type="GO" id="GO:0022010">
    <property type="term" value="P:central nervous system myelination"/>
    <property type="evidence" value="ECO:0000315"/>
    <property type="project" value="MGI"/>
</dbReference>
<dbReference type="GO" id="GO:0021549">
    <property type="term" value="P:cerebellum development"/>
    <property type="evidence" value="ECO:0007669"/>
    <property type="project" value="Ensembl"/>
</dbReference>
<dbReference type="GO" id="GO:0050673">
    <property type="term" value="P:epithelial cell proliferation"/>
    <property type="evidence" value="ECO:0000315"/>
    <property type="project" value="MGI"/>
</dbReference>
<dbReference type="GO" id="GO:0007212">
    <property type="term" value="P:G protein-coupled dopamine receptor signaling pathway"/>
    <property type="evidence" value="ECO:0000315"/>
    <property type="project" value="MGI"/>
</dbReference>
<dbReference type="GO" id="GO:0007215">
    <property type="term" value="P:glutamate receptor signaling pathway"/>
    <property type="evidence" value="ECO:0000315"/>
    <property type="project" value="MGI"/>
</dbReference>
<dbReference type="GO" id="GO:0007611">
    <property type="term" value="P:learning or memory"/>
    <property type="evidence" value="ECO:0000315"/>
    <property type="project" value="MGI"/>
</dbReference>
<dbReference type="GO" id="GO:0006509">
    <property type="term" value="P:membrane protein ectodomain proteolysis"/>
    <property type="evidence" value="ECO:0000250"/>
    <property type="project" value="UniProtKB"/>
</dbReference>
<dbReference type="GO" id="GO:0031293">
    <property type="term" value="P:membrane protein intracellular domain proteolysis"/>
    <property type="evidence" value="ECO:0000266"/>
    <property type="project" value="ComplexPortal"/>
</dbReference>
<dbReference type="GO" id="GO:0002262">
    <property type="term" value="P:myeloid cell homeostasis"/>
    <property type="evidence" value="ECO:0000315"/>
    <property type="project" value="MGI"/>
</dbReference>
<dbReference type="GO" id="GO:0051402">
    <property type="term" value="P:neuron apoptotic process"/>
    <property type="evidence" value="ECO:0000315"/>
    <property type="project" value="MGI"/>
</dbReference>
<dbReference type="GO" id="GO:0007220">
    <property type="term" value="P:Notch receptor processing"/>
    <property type="evidence" value="ECO:0000303"/>
    <property type="project" value="ComplexPortal"/>
</dbReference>
<dbReference type="GO" id="GO:0007219">
    <property type="term" value="P:Notch signaling pathway"/>
    <property type="evidence" value="ECO:0007669"/>
    <property type="project" value="UniProtKB-KW"/>
</dbReference>
<dbReference type="GO" id="GO:0042986">
    <property type="term" value="P:positive regulation of amyloid precursor protein biosynthetic process"/>
    <property type="evidence" value="ECO:0000315"/>
    <property type="project" value="MGI"/>
</dbReference>
<dbReference type="GO" id="GO:0016485">
    <property type="term" value="P:protein processing"/>
    <property type="evidence" value="ECO:0000250"/>
    <property type="project" value="UniProtKB"/>
</dbReference>
<dbReference type="GO" id="GO:1900271">
    <property type="term" value="P:regulation of long-term synaptic potentiation"/>
    <property type="evidence" value="ECO:0000315"/>
    <property type="project" value="MGI"/>
</dbReference>
<dbReference type="GO" id="GO:1990926">
    <property type="term" value="P:short-term synaptic potentiation"/>
    <property type="evidence" value="ECO:0000315"/>
    <property type="project" value="MGI"/>
</dbReference>
<dbReference type="GO" id="GO:0042098">
    <property type="term" value="P:T cell proliferation"/>
    <property type="evidence" value="ECO:0000315"/>
    <property type="project" value="MGI"/>
</dbReference>
<dbReference type="CDD" id="cd03881">
    <property type="entry name" value="M28_Nicastrin"/>
    <property type="match status" value="1"/>
</dbReference>
<dbReference type="FunFam" id="3.40.630.10:FF:000030">
    <property type="entry name" value="nicastrin"/>
    <property type="match status" value="1"/>
</dbReference>
<dbReference type="Gene3D" id="3.40.630.10">
    <property type="entry name" value="Zn peptidases"/>
    <property type="match status" value="1"/>
</dbReference>
<dbReference type="InterPro" id="IPR041084">
    <property type="entry name" value="Ncstrn_small"/>
</dbReference>
<dbReference type="InterPro" id="IPR008710">
    <property type="entry name" value="Nicastrin"/>
</dbReference>
<dbReference type="PANTHER" id="PTHR21092">
    <property type="entry name" value="NICASTRIN"/>
    <property type="match status" value="1"/>
</dbReference>
<dbReference type="PANTHER" id="PTHR21092:SF0">
    <property type="entry name" value="NICASTRIN"/>
    <property type="match status" value="1"/>
</dbReference>
<dbReference type="Pfam" id="PF18266">
    <property type="entry name" value="Ncstrn_small"/>
    <property type="match status" value="1"/>
</dbReference>
<dbReference type="Pfam" id="PF05450">
    <property type="entry name" value="Nicastrin"/>
    <property type="match status" value="1"/>
</dbReference>
<dbReference type="SUPFAM" id="SSF53187">
    <property type="entry name" value="Zn-dependent exopeptidases"/>
    <property type="match status" value="1"/>
</dbReference>
<sequence length="708" mass="78492">MATTRGGSGPDPGSRGLLLLSFSVVLAGLCGGNSVERKIYIPLNKTAPCVRLLNATHQIGCQSSISGDTGVIHVVEKEEDLKWVLTDGPNPPYMVLLEGKLFTRDVMEKLKGTTSRIAGLAVTLAKPNSTSSFSPSVQCPNDGFGIYSNSYGPEFAHCKKTLWNELGNGLAYEDFSFPIFLLEDENETKVIKQCYQDHNLGQNGSAPSFPLCAMQLFSHMHAVISTATCMRRSFIQSTFSINPEIVCDPLSDYNVWSMLKPINTSVGLEPDVRVVVAATRLDSRSFFWNVAPGAESAVASFVTQLAAAEALHKAPDVTTLSRNVMFVFFQGETFDYIGSSRMVYDMENGKFPVRLENIDSFVELGQVALRTSLDLWMHTDPMSQKNESVKNQVEDLLATLEKSGAGVPEVVLRRLAQSQALPPSSLQRFLRARNISGVVLADHSGSFHNRYYQSIYDTAENINVTYPEWQSPEEDLNFVTDTAKALANVATVLARALYELAGGTNFSSSIQADPQTVTRLLYGFLVRANNSWFQSILKHDLRSYLDDRPLQHYIAVSSPTNTTYVVQYALANLTGKATNLTREQCQDPSKVPNESKDLYEYSWVQGPWNSNRTERLPQCVRSTVRLARALSPAFELSQWSSTEYSTWAESRWKDIQARIFLIASKELEFITLIVGFSTLVFSLIVTYCINAKADVLFVAPREPGAVSY</sequence>
<protein>
    <recommendedName>
        <fullName>Nicastrin</fullName>
    </recommendedName>
</protein>
<feature type="signal peptide" evidence="2">
    <location>
        <begin position="1"/>
        <end position="27"/>
    </location>
</feature>
<feature type="chain" id="PRO_0000019682" description="Nicastrin">
    <location>
        <begin position="28"/>
        <end position="708"/>
    </location>
</feature>
<feature type="topological domain" description="Lumenal" evidence="1">
    <location>
        <begin position="28"/>
        <end position="668"/>
    </location>
</feature>
<feature type="transmembrane region" description="Helical" evidence="1">
    <location>
        <begin position="669"/>
        <end position="689"/>
    </location>
</feature>
<feature type="topological domain" description="Cytoplasmic" evidence="1">
    <location>
        <begin position="690"/>
        <end position="708"/>
    </location>
</feature>
<feature type="glycosylation site" description="N-linked (GlcNAc...) asparagine" evidence="2">
    <location>
        <position position="44"/>
    </location>
</feature>
<feature type="glycosylation site" description="N-linked (GlcNAc...) asparagine" evidence="2">
    <location>
        <position position="54"/>
    </location>
</feature>
<feature type="glycosylation site" description="N-linked (GlcNAc...) asparagine" evidence="2">
    <location>
        <position position="128"/>
    </location>
</feature>
<feature type="glycosylation site" description="N-linked (GlcNAc...) asparagine" evidence="4">
    <location>
        <position position="186"/>
    </location>
</feature>
<feature type="glycosylation site" description="N-linked (GlcNAc...) asparagine" evidence="2">
    <location>
        <position position="203"/>
    </location>
</feature>
<feature type="glycosylation site" description="N-linked (GlcNAc...) asparagine" evidence="4">
    <location>
        <position position="263"/>
    </location>
</feature>
<feature type="glycosylation site" description="N-linked (GlcNAc...) asparagine" evidence="4">
    <location>
        <position position="386"/>
    </location>
</feature>
<feature type="glycosylation site" description="N-linked (GlcNAc...) asparagine" evidence="2">
    <location>
        <position position="434"/>
    </location>
</feature>
<feature type="glycosylation site" description="N-linked (GlcNAc...) asparagine" evidence="2">
    <location>
        <position position="463"/>
    </location>
</feature>
<feature type="glycosylation site" description="N-linked (GlcNAc...) asparagine" evidence="4">
    <location>
        <position position="505"/>
    </location>
</feature>
<feature type="glycosylation site" description="N-linked (GlcNAc...) asparagine" evidence="2">
    <location>
        <position position="529"/>
    </location>
</feature>
<feature type="glycosylation site" description="N-linked (GlcNAc...) asparagine" evidence="4">
    <location>
        <position position="561"/>
    </location>
</feature>
<feature type="glycosylation site" description="N-linked (GlcNAc...) asparagine" evidence="2">
    <location>
        <position position="572"/>
    </location>
</feature>
<feature type="glycosylation site" description="N-linked (GlcNAc...) asparagine" evidence="2">
    <location>
        <position position="579"/>
    </location>
</feature>
<feature type="glycosylation site" description="N-linked (GlcNAc...) asparagine" evidence="2">
    <location>
        <position position="593"/>
    </location>
</feature>
<feature type="glycosylation site" description="N-linked (GlcNAc...) asparagine" evidence="4">
    <location>
        <position position="611"/>
    </location>
</feature>
<feature type="disulfide bond" evidence="1">
    <location>
        <begin position="49"/>
        <end position="61"/>
    </location>
</feature>
<feature type="disulfide bond" evidence="1">
    <location>
        <begin position="139"/>
        <end position="158"/>
    </location>
</feature>
<feature type="disulfide bond" evidence="1">
    <location>
        <begin position="194"/>
        <end position="212"/>
    </location>
</feature>
<feature type="disulfide bond" evidence="1">
    <location>
        <begin position="229"/>
        <end position="247"/>
    </location>
</feature>
<feature type="disulfide bond" evidence="1">
    <location>
        <begin position="585"/>
        <end position="619"/>
    </location>
</feature>
<feature type="sequence conflict" description="In Ref. 1; AAG11413 and 3; AAH19998." evidence="5" ref="1 3">
    <original>R</original>
    <variation>K</variation>
    <location>
        <position position="527"/>
    </location>
</feature>
<feature type="sequence conflict" description="In Ref. 1; AAG11413." evidence="5" ref="1">
    <original>E</original>
    <variation>K</variation>
    <location>
        <position position="666"/>
    </location>
</feature>
<feature type="sequence conflict" description="In Ref. 1; AAG11413 and 3; AAH19998." evidence="5" ref="1 3">
    <original>TLV</original>
    <variation>ILI</variation>
    <location>
        <begin position="678"/>
        <end position="680"/>
    </location>
</feature>
<name>NICA_MOUSE</name>
<organism>
    <name type="scientific">Mus musculus</name>
    <name type="common">Mouse</name>
    <dbReference type="NCBI Taxonomy" id="10090"/>
    <lineage>
        <taxon>Eukaryota</taxon>
        <taxon>Metazoa</taxon>
        <taxon>Chordata</taxon>
        <taxon>Craniata</taxon>
        <taxon>Vertebrata</taxon>
        <taxon>Euteleostomi</taxon>
        <taxon>Mammalia</taxon>
        <taxon>Eutheria</taxon>
        <taxon>Euarchontoglires</taxon>
        <taxon>Glires</taxon>
        <taxon>Rodentia</taxon>
        <taxon>Myomorpha</taxon>
        <taxon>Muroidea</taxon>
        <taxon>Muridae</taxon>
        <taxon>Murinae</taxon>
        <taxon>Mus</taxon>
        <taxon>Mus</taxon>
    </lineage>
</organism>
<proteinExistence type="evidence at protein level"/>
<accession>P57716</accession>
<accession>E9QLZ6</accession>
<accession>Q8VE20</accession>
<keyword id="KW-0968">Cytoplasmic vesicle</keyword>
<keyword id="KW-1015">Disulfide bond</keyword>
<keyword id="KW-0325">Glycoprotein</keyword>
<keyword id="KW-0472">Membrane</keyword>
<keyword id="KW-0914">Notch signaling pathway</keyword>
<keyword id="KW-1185">Reference proteome</keyword>
<keyword id="KW-0732">Signal</keyword>
<keyword id="KW-0812">Transmembrane</keyword>
<keyword id="KW-1133">Transmembrane helix</keyword>